<reference key="1">
    <citation type="submission" date="2007-05" db="EMBL/GenBank/DDBJ databases">
        <title>Complete sequence of Pseudomonas putida F1.</title>
        <authorList>
            <consortium name="US DOE Joint Genome Institute"/>
            <person name="Copeland A."/>
            <person name="Lucas S."/>
            <person name="Lapidus A."/>
            <person name="Barry K."/>
            <person name="Detter J.C."/>
            <person name="Glavina del Rio T."/>
            <person name="Hammon N."/>
            <person name="Israni S."/>
            <person name="Dalin E."/>
            <person name="Tice H."/>
            <person name="Pitluck S."/>
            <person name="Chain P."/>
            <person name="Malfatti S."/>
            <person name="Shin M."/>
            <person name="Vergez L."/>
            <person name="Schmutz J."/>
            <person name="Larimer F."/>
            <person name="Land M."/>
            <person name="Hauser L."/>
            <person name="Kyrpides N."/>
            <person name="Lykidis A."/>
            <person name="Parales R."/>
            <person name="Richardson P."/>
        </authorList>
    </citation>
    <scope>NUCLEOTIDE SEQUENCE [LARGE SCALE GENOMIC DNA]</scope>
    <source>
        <strain>ATCC 700007 / DSM 6899 / JCM 31910 / BCRC 17059 / LMG 24140 / F1</strain>
    </source>
</reference>
<keyword id="KW-0131">Cell cycle</keyword>
<keyword id="KW-0132">Cell division</keyword>
<keyword id="KW-0143">Chaperone</keyword>
<keyword id="KW-0963">Cytoplasm</keyword>
<keyword id="KW-0413">Isomerase</keyword>
<keyword id="KW-0697">Rotamase</keyword>
<gene>
    <name evidence="1" type="primary">tig</name>
    <name type="ordered locus">Pput_3470</name>
</gene>
<name>TIG_PSEP1</name>
<comment type="function">
    <text evidence="1">Involved in protein export. Acts as a chaperone by maintaining the newly synthesized protein in an open conformation. Functions as a peptidyl-prolyl cis-trans isomerase.</text>
</comment>
<comment type="catalytic activity">
    <reaction evidence="1">
        <text>[protein]-peptidylproline (omega=180) = [protein]-peptidylproline (omega=0)</text>
        <dbReference type="Rhea" id="RHEA:16237"/>
        <dbReference type="Rhea" id="RHEA-COMP:10747"/>
        <dbReference type="Rhea" id="RHEA-COMP:10748"/>
        <dbReference type="ChEBI" id="CHEBI:83833"/>
        <dbReference type="ChEBI" id="CHEBI:83834"/>
        <dbReference type="EC" id="5.2.1.8"/>
    </reaction>
</comment>
<comment type="subcellular location">
    <subcellularLocation>
        <location>Cytoplasm</location>
    </subcellularLocation>
    <text evidence="1">About half TF is bound to the ribosome near the polypeptide exit tunnel while the other half is free in the cytoplasm.</text>
</comment>
<comment type="domain">
    <text evidence="1">Consists of 3 domains; the N-terminus binds the ribosome, the middle domain has PPIase activity, while the C-terminus has intrinsic chaperone activity on its own.</text>
</comment>
<comment type="similarity">
    <text evidence="1">Belongs to the FKBP-type PPIase family. Tig subfamily.</text>
</comment>
<feature type="chain" id="PRO_1000022736" description="Trigger factor">
    <location>
        <begin position="1"/>
        <end position="437"/>
    </location>
</feature>
<feature type="domain" description="PPIase FKBP-type" evidence="1">
    <location>
        <begin position="161"/>
        <end position="246"/>
    </location>
</feature>
<evidence type="ECO:0000255" key="1">
    <source>
        <dbReference type="HAMAP-Rule" id="MF_00303"/>
    </source>
</evidence>
<proteinExistence type="inferred from homology"/>
<protein>
    <recommendedName>
        <fullName evidence="1">Trigger factor</fullName>
        <shortName evidence="1">TF</shortName>
        <ecNumber evidence="1">5.2.1.8</ecNumber>
    </recommendedName>
    <alternativeName>
        <fullName evidence="1">PPIase</fullName>
    </alternativeName>
</protein>
<sequence length="437" mass="48459">MQVSVENTSALERRMTIAVPAERVENEVNKRLQQTAKRAKIAGFRPGKVPMTVIRQRFEADARQEAFGDLVQASFYEAIVEQKLNPAGAPAVEPKSFEKGKDLEFVAIFEVFPEFTVAGLESIKVERLSAEVADSDLDNMLEVLRKQNTRFEAVERAAQNDDQVNIDFVGKVDGEAFAGGSAKGTLLVLGSGRMIPGFEEGLVGAKAGEERVVNVTFPEDYQNLDLAGKAAEFTITVNSVSAPVLPELNEAFFAQFGIKESTLEGFRAEVRKNMERELRQAIKTKVKNQVMDGLLAANPIEVPKALLENEVNRLRVQAVQQFGGNIKPEQLPVELFEEQAKRRVVLGLIVAEVVKQFELKPDDAKVREMIEEMASAYQEPEQVIAWYYKNDQQLNEVRSVVLEEQVVDTVLQKATVTDKSVSYEEAVKPAEAPAAAE</sequence>
<accession>A5W636</accession>
<organism>
    <name type="scientific">Pseudomonas putida (strain ATCC 700007 / DSM 6899 / JCM 31910 / BCRC 17059 / LMG 24140 / F1)</name>
    <dbReference type="NCBI Taxonomy" id="351746"/>
    <lineage>
        <taxon>Bacteria</taxon>
        <taxon>Pseudomonadati</taxon>
        <taxon>Pseudomonadota</taxon>
        <taxon>Gammaproteobacteria</taxon>
        <taxon>Pseudomonadales</taxon>
        <taxon>Pseudomonadaceae</taxon>
        <taxon>Pseudomonas</taxon>
    </lineage>
</organism>
<dbReference type="EC" id="5.2.1.8" evidence="1"/>
<dbReference type="EMBL" id="CP000712">
    <property type="protein sequence ID" value="ABQ79596.1"/>
    <property type="molecule type" value="Genomic_DNA"/>
</dbReference>
<dbReference type="SMR" id="A5W636"/>
<dbReference type="KEGG" id="ppf:Pput_3470"/>
<dbReference type="eggNOG" id="COG0544">
    <property type="taxonomic scope" value="Bacteria"/>
</dbReference>
<dbReference type="HOGENOM" id="CLU_033058_2_0_6"/>
<dbReference type="GO" id="GO:0005737">
    <property type="term" value="C:cytoplasm"/>
    <property type="evidence" value="ECO:0007669"/>
    <property type="project" value="UniProtKB-SubCell"/>
</dbReference>
<dbReference type="GO" id="GO:0003755">
    <property type="term" value="F:peptidyl-prolyl cis-trans isomerase activity"/>
    <property type="evidence" value="ECO:0007669"/>
    <property type="project" value="UniProtKB-UniRule"/>
</dbReference>
<dbReference type="GO" id="GO:0044183">
    <property type="term" value="F:protein folding chaperone"/>
    <property type="evidence" value="ECO:0007669"/>
    <property type="project" value="TreeGrafter"/>
</dbReference>
<dbReference type="GO" id="GO:0043022">
    <property type="term" value="F:ribosome binding"/>
    <property type="evidence" value="ECO:0007669"/>
    <property type="project" value="TreeGrafter"/>
</dbReference>
<dbReference type="GO" id="GO:0051083">
    <property type="term" value="P:'de novo' cotranslational protein folding"/>
    <property type="evidence" value="ECO:0007669"/>
    <property type="project" value="TreeGrafter"/>
</dbReference>
<dbReference type="GO" id="GO:0051301">
    <property type="term" value="P:cell division"/>
    <property type="evidence" value="ECO:0007669"/>
    <property type="project" value="UniProtKB-KW"/>
</dbReference>
<dbReference type="GO" id="GO:0061077">
    <property type="term" value="P:chaperone-mediated protein folding"/>
    <property type="evidence" value="ECO:0007669"/>
    <property type="project" value="TreeGrafter"/>
</dbReference>
<dbReference type="GO" id="GO:0015031">
    <property type="term" value="P:protein transport"/>
    <property type="evidence" value="ECO:0007669"/>
    <property type="project" value="UniProtKB-UniRule"/>
</dbReference>
<dbReference type="GO" id="GO:0043335">
    <property type="term" value="P:protein unfolding"/>
    <property type="evidence" value="ECO:0007669"/>
    <property type="project" value="TreeGrafter"/>
</dbReference>
<dbReference type="FunFam" id="3.10.50.40:FF:000001">
    <property type="entry name" value="Trigger factor"/>
    <property type="match status" value="1"/>
</dbReference>
<dbReference type="Gene3D" id="3.10.50.40">
    <property type="match status" value="1"/>
</dbReference>
<dbReference type="Gene3D" id="3.30.70.1050">
    <property type="entry name" value="Trigger factor ribosome-binding domain"/>
    <property type="match status" value="1"/>
</dbReference>
<dbReference type="Gene3D" id="1.10.3120.10">
    <property type="entry name" value="Trigger factor, C-terminal domain"/>
    <property type="match status" value="1"/>
</dbReference>
<dbReference type="HAMAP" id="MF_00303">
    <property type="entry name" value="Trigger_factor_Tig"/>
    <property type="match status" value="1"/>
</dbReference>
<dbReference type="InterPro" id="IPR046357">
    <property type="entry name" value="PPIase_dom_sf"/>
</dbReference>
<dbReference type="InterPro" id="IPR001179">
    <property type="entry name" value="PPIase_FKBP_dom"/>
</dbReference>
<dbReference type="InterPro" id="IPR005215">
    <property type="entry name" value="Trig_fac"/>
</dbReference>
<dbReference type="InterPro" id="IPR008880">
    <property type="entry name" value="Trigger_fac_C"/>
</dbReference>
<dbReference type="InterPro" id="IPR037041">
    <property type="entry name" value="Trigger_fac_C_sf"/>
</dbReference>
<dbReference type="InterPro" id="IPR008881">
    <property type="entry name" value="Trigger_fac_ribosome-bd_bac"/>
</dbReference>
<dbReference type="InterPro" id="IPR036611">
    <property type="entry name" value="Trigger_fac_ribosome-bd_sf"/>
</dbReference>
<dbReference type="InterPro" id="IPR027304">
    <property type="entry name" value="Trigger_fact/SurA_dom_sf"/>
</dbReference>
<dbReference type="NCBIfam" id="TIGR00115">
    <property type="entry name" value="tig"/>
    <property type="match status" value="1"/>
</dbReference>
<dbReference type="PANTHER" id="PTHR30560">
    <property type="entry name" value="TRIGGER FACTOR CHAPERONE AND PEPTIDYL-PROLYL CIS/TRANS ISOMERASE"/>
    <property type="match status" value="1"/>
</dbReference>
<dbReference type="PANTHER" id="PTHR30560:SF3">
    <property type="entry name" value="TRIGGER FACTOR-LIKE PROTEIN TIG, CHLOROPLASTIC"/>
    <property type="match status" value="1"/>
</dbReference>
<dbReference type="Pfam" id="PF00254">
    <property type="entry name" value="FKBP_C"/>
    <property type="match status" value="1"/>
</dbReference>
<dbReference type="Pfam" id="PF05698">
    <property type="entry name" value="Trigger_C"/>
    <property type="match status" value="1"/>
</dbReference>
<dbReference type="Pfam" id="PF05697">
    <property type="entry name" value="Trigger_N"/>
    <property type="match status" value="1"/>
</dbReference>
<dbReference type="PIRSF" id="PIRSF003095">
    <property type="entry name" value="Trigger_factor"/>
    <property type="match status" value="1"/>
</dbReference>
<dbReference type="SUPFAM" id="SSF54534">
    <property type="entry name" value="FKBP-like"/>
    <property type="match status" value="1"/>
</dbReference>
<dbReference type="SUPFAM" id="SSF109998">
    <property type="entry name" value="Triger factor/SurA peptide-binding domain-like"/>
    <property type="match status" value="1"/>
</dbReference>
<dbReference type="SUPFAM" id="SSF102735">
    <property type="entry name" value="Trigger factor ribosome-binding domain"/>
    <property type="match status" value="1"/>
</dbReference>
<dbReference type="PROSITE" id="PS50059">
    <property type="entry name" value="FKBP_PPIASE"/>
    <property type="match status" value="1"/>
</dbReference>